<feature type="chain" id="PRO_1000058770" description="Nicotinate-nucleotide--dimethylbenzimidazole phosphoribosyltransferase">
    <location>
        <begin position="1"/>
        <end position="336"/>
    </location>
</feature>
<feature type="region of interest" description="Disordered" evidence="2">
    <location>
        <begin position="20"/>
        <end position="41"/>
    </location>
</feature>
<feature type="active site" description="Proton acceptor" evidence="1">
    <location>
        <position position="304"/>
    </location>
</feature>
<protein>
    <recommendedName>
        <fullName evidence="1">Nicotinate-nucleotide--dimethylbenzimidazole phosphoribosyltransferase</fullName>
        <shortName evidence="1">NN:DBI PRT</shortName>
        <ecNumber evidence="1">2.4.2.21</ecNumber>
    </recommendedName>
    <alternativeName>
        <fullName evidence="1">N(1)-alpha-phosphoribosyltransferase</fullName>
    </alternativeName>
</protein>
<sequence length="336" mass="33809">MLPALTDLAQFRDLLGAAPGPDAAARAGAEERNGQLTKPPGALGRLEDLAIWYAGWRGDARPRIEAPQVIVFAGNHGVTAQGVSAFPAEVTVQMVMNFEHGGAAINQLARAAGARMDVHALELDRPTQDFTQAPAMTGDELLAALQCGWAAVDPAADLLVVGEMGIGNTTPAAAIAHALFGGAAGDWTGRGTGVDDAGLANKTRVVAEGVALHTSRDGLEVLRCLGGREIAAMAGAIAAARQLRIPVILDGFICTAAAAALAAVAANALDHTVAGHQSAEGAHAVLLAKLGKAPLLSLGLRLGEGSGGALAINILKSAVACHSGMATFAEAGVSDG</sequence>
<proteinExistence type="inferred from homology"/>
<name>COBT_RUEPO</name>
<gene>
    <name evidence="1" type="primary">cobT</name>
    <name type="ordered locus">SPO1423</name>
</gene>
<accession>Q5LTJ1</accession>
<reference key="1">
    <citation type="journal article" date="2004" name="Nature">
        <title>Genome sequence of Silicibacter pomeroyi reveals adaptations to the marine environment.</title>
        <authorList>
            <person name="Moran M.A."/>
            <person name="Buchan A."/>
            <person name="Gonzalez J.M."/>
            <person name="Heidelberg J.F."/>
            <person name="Whitman W.B."/>
            <person name="Kiene R.P."/>
            <person name="Henriksen J.R."/>
            <person name="King G.M."/>
            <person name="Belas R."/>
            <person name="Fuqua C."/>
            <person name="Brinkac L.M."/>
            <person name="Lewis M."/>
            <person name="Johri S."/>
            <person name="Weaver B."/>
            <person name="Pai G."/>
            <person name="Eisen J.A."/>
            <person name="Rahe E."/>
            <person name="Sheldon W.M."/>
            <person name="Ye W."/>
            <person name="Miller T.R."/>
            <person name="Carlton J."/>
            <person name="Rasko D.A."/>
            <person name="Paulsen I.T."/>
            <person name="Ren Q."/>
            <person name="Daugherty S.C."/>
            <person name="DeBoy R.T."/>
            <person name="Dodson R.J."/>
            <person name="Durkin A.S."/>
            <person name="Madupu R."/>
            <person name="Nelson W.C."/>
            <person name="Sullivan S.A."/>
            <person name="Rosovitz M.J."/>
            <person name="Haft D.H."/>
            <person name="Selengut J."/>
            <person name="Ward N."/>
        </authorList>
    </citation>
    <scope>NUCLEOTIDE SEQUENCE [LARGE SCALE GENOMIC DNA]</scope>
    <source>
        <strain>ATCC 700808 / DSM 15171 / DSS-3</strain>
    </source>
</reference>
<reference key="2">
    <citation type="journal article" date="2014" name="Stand. Genomic Sci.">
        <title>An updated genome annotation for the model marine bacterium Ruegeria pomeroyi DSS-3.</title>
        <authorList>
            <person name="Rivers A.R."/>
            <person name="Smith C.B."/>
            <person name="Moran M.A."/>
        </authorList>
    </citation>
    <scope>GENOME REANNOTATION</scope>
    <source>
        <strain>ATCC 700808 / DSM 15171 / DSS-3</strain>
    </source>
</reference>
<organism>
    <name type="scientific">Ruegeria pomeroyi (strain ATCC 700808 / DSM 15171 / DSS-3)</name>
    <name type="common">Silicibacter pomeroyi</name>
    <dbReference type="NCBI Taxonomy" id="246200"/>
    <lineage>
        <taxon>Bacteria</taxon>
        <taxon>Pseudomonadati</taxon>
        <taxon>Pseudomonadota</taxon>
        <taxon>Alphaproteobacteria</taxon>
        <taxon>Rhodobacterales</taxon>
        <taxon>Roseobacteraceae</taxon>
        <taxon>Ruegeria</taxon>
    </lineage>
</organism>
<keyword id="KW-0169">Cobalamin biosynthesis</keyword>
<keyword id="KW-0328">Glycosyltransferase</keyword>
<keyword id="KW-1185">Reference proteome</keyword>
<keyword id="KW-0808">Transferase</keyword>
<comment type="function">
    <text evidence="1">Catalyzes the synthesis of alpha-ribazole-5'-phosphate from nicotinate mononucleotide (NAMN) and 5,6-dimethylbenzimidazole (DMB).</text>
</comment>
<comment type="catalytic activity">
    <reaction evidence="1">
        <text>5,6-dimethylbenzimidazole + nicotinate beta-D-ribonucleotide = alpha-ribazole 5'-phosphate + nicotinate + H(+)</text>
        <dbReference type="Rhea" id="RHEA:11196"/>
        <dbReference type="ChEBI" id="CHEBI:15378"/>
        <dbReference type="ChEBI" id="CHEBI:15890"/>
        <dbReference type="ChEBI" id="CHEBI:32544"/>
        <dbReference type="ChEBI" id="CHEBI:57502"/>
        <dbReference type="ChEBI" id="CHEBI:57918"/>
        <dbReference type="EC" id="2.4.2.21"/>
    </reaction>
</comment>
<comment type="pathway">
    <text evidence="1">Nucleoside biosynthesis; alpha-ribazole biosynthesis; alpha-ribazole from 5,6-dimethylbenzimidazole: step 1/2.</text>
</comment>
<comment type="similarity">
    <text evidence="1">Belongs to the CobT family.</text>
</comment>
<evidence type="ECO:0000255" key="1">
    <source>
        <dbReference type="HAMAP-Rule" id="MF_00230"/>
    </source>
</evidence>
<evidence type="ECO:0000256" key="2">
    <source>
        <dbReference type="SAM" id="MobiDB-lite"/>
    </source>
</evidence>
<dbReference type="EC" id="2.4.2.21" evidence="1"/>
<dbReference type="EMBL" id="CP000031">
    <property type="protein sequence ID" value="AAV94710.1"/>
    <property type="molecule type" value="Genomic_DNA"/>
</dbReference>
<dbReference type="RefSeq" id="WP_011047160.1">
    <property type="nucleotide sequence ID" value="NC_003911.12"/>
</dbReference>
<dbReference type="SMR" id="Q5LTJ1"/>
<dbReference type="STRING" id="246200.SPO1423"/>
<dbReference type="PaxDb" id="246200-SPO1423"/>
<dbReference type="KEGG" id="sil:SPO1423"/>
<dbReference type="eggNOG" id="COG2038">
    <property type="taxonomic scope" value="Bacteria"/>
</dbReference>
<dbReference type="HOGENOM" id="CLU_002982_0_1_5"/>
<dbReference type="OrthoDB" id="9781491at2"/>
<dbReference type="UniPathway" id="UPA00061">
    <property type="reaction ID" value="UER00516"/>
</dbReference>
<dbReference type="Proteomes" id="UP000001023">
    <property type="component" value="Chromosome"/>
</dbReference>
<dbReference type="GO" id="GO:0008939">
    <property type="term" value="F:nicotinate-nucleotide-dimethylbenzimidazole phosphoribosyltransferase activity"/>
    <property type="evidence" value="ECO:0007669"/>
    <property type="project" value="UniProtKB-UniRule"/>
</dbReference>
<dbReference type="GO" id="GO:0009236">
    <property type="term" value="P:cobalamin biosynthetic process"/>
    <property type="evidence" value="ECO:0007669"/>
    <property type="project" value="UniProtKB-KW"/>
</dbReference>
<dbReference type="CDD" id="cd02439">
    <property type="entry name" value="DMB-PRT_CobT"/>
    <property type="match status" value="1"/>
</dbReference>
<dbReference type="Gene3D" id="1.10.1610.10">
    <property type="match status" value="1"/>
</dbReference>
<dbReference type="Gene3D" id="3.40.50.10210">
    <property type="match status" value="1"/>
</dbReference>
<dbReference type="HAMAP" id="MF_00230">
    <property type="entry name" value="CobT"/>
    <property type="match status" value="1"/>
</dbReference>
<dbReference type="InterPro" id="IPR003200">
    <property type="entry name" value="Nict_dMeBzImd_PRibTrfase"/>
</dbReference>
<dbReference type="InterPro" id="IPR017846">
    <property type="entry name" value="Nict_dMeBzImd_PRibTrfase_bact"/>
</dbReference>
<dbReference type="InterPro" id="IPR023195">
    <property type="entry name" value="Nict_dMeBzImd_PRibTrfase_N"/>
</dbReference>
<dbReference type="InterPro" id="IPR036087">
    <property type="entry name" value="Nict_dMeBzImd_PRibTrfase_sf"/>
</dbReference>
<dbReference type="NCBIfam" id="TIGR03160">
    <property type="entry name" value="cobT_DBIPRT"/>
    <property type="match status" value="1"/>
</dbReference>
<dbReference type="NCBIfam" id="NF000996">
    <property type="entry name" value="PRK00105.1"/>
    <property type="match status" value="1"/>
</dbReference>
<dbReference type="PANTHER" id="PTHR43463">
    <property type="entry name" value="NICOTINATE-NUCLEOTIDE--DIMETHYLBENZIMIDAZOLE PHOSPHORIBOSYLTRANSFERASE"/>
    <property type="match status" value="1"/>
</dbReference>
<dbReference type="PANTHER" id="PTHR43463:SF1">
    <property type="entry name" value="NICOTINATE-NUCLEOTIDE--DIMETHYLBENZIMIDAZOLE PHOSPHORIBOSYLTRANSFERASE"/>
    <property type="match status" value="1"/>
</dbReference>
<dbReference type="Pfam" id="PF02277">
    <property type="entry name" value="DBI_PRT"/>
    <property type="match status" value="1"/>
</dbReference>
<dbReference type="SUPFAM" id="SSF52733">
    <property type="entry name" value="Nicotinate mononucleotide:5,6-dimethylbenzimidazole phosphoribosyltransferase (CobT)"/>
    <property type="match status" value="1"/>
</dbReference>